<comment type="function">
    <text evidence="1">Forms part of the ribosomal stalk, playing a central role in the interaction of the ribosome with GTP-bound translation factors.</text>
</comment>
<comment type="subunit">
    <text evidence="1">Part of the ribosomal stalk of the 50S ribosomal subunit. The N-terminus interacts with L11 and the large rRNA to form the base of the stalk. The C-terminus forms an elongated spine to which L12 dimers bind in a sequential fashion forming a multimeric L10(L12)X complex.</text>
</comment>
<comment type="similarity">
    <text evidence="1">Belongs to the universal ribosomal protein uL10 family.</text>
</comment>
<accession>Q5HID6</accession>
<gene>
    <name evidence="1" type="primary">rplJ</name>
    <name type="ordered locus">SACOL0585</name>
</gene>
<dbReference type="EMBL" id="CP000046">
    <property type="protein sequence ID" value="AAW37695.1"/>
    <property type="molecule type" value="Genomic_DNA"/>
</dbReference>
<dbReference type="RefSeq" id="WP_001273085.1">
    <property type="nucleotide sequence ID" value="NZ_JBGOFO010000009.1"/>
</dbReference>
<dbReference type="SMR" id="Q5HID6"/>
<dbReference type="KEGG" id="sac:SACOL0585"/>
<dbReference type="HOGENOM" id="CLU_092227_2_0_9"/>
<dbReference type="Proteomes" id="UP000000530">
    <property type="component" value="Chromosome"/>
</dbReference>
<dbReference type="GO" id="GO:0015934">
    <property type="term" value="C:large ribosomal subunit"/>
    <property type="evidence" value="ECO:0007669"/>
    <property type="project" value="InterPro"/>
</dbReference>
<dbReference type="GO" id="GO:0070180">
    <property type="term" value="F:large ribosomal subunit rRNA binding"/>
    <property type="evidence" value="ECO:0007669"/>
    <property type="project" value="UniProtKB-UniRule"/>
</dbReference>
<dbReference type="GO" id="GO:0003735">
    <property type="term" value="F:structural constituent of ribosome"/>
    <property type="evidence" value="ECO:0007669"/>
    <property type="project" value="InterPro"/>
</dbReference>
<dbReference type="GO" id="GO:0006412">
    <property type="term" value="P:translation"/>
    <property type="evidence" value="ECO:0007669"/>
    <property type="project" value="UniProtKB-UniRule"/>
</dbReference>
<dbReference type="CDD" id="cd05797">
    <property type="entry name" value="Ribosomal_L10"/>
    <property type="match status" value="1"/>
</dbReference>
<dbReference type="FunFam" id="3.30.70.1730:FF:000001">
    <property type="entry name" value="50S ribosomal protein L10"/>
    <property type="match status" value="1"/>
</dbReference>
<dbReference type="Gene3D" id="3.30.70.1730">
    <property type="match status" value="1"/>
</dbReference>
<dbReference type="Gene3D" id="6.10.250.290">
    <property type="match status" value="1"/>
</dbReference>
<dbReference type="HAMAP" id="MF_00362">
    <property type="entry name" value="Ribosomal_uL10"/>
    <property type="match status" value="1"/>
</dbReference>
<dbReference type="InterPro" id="IPR001790">
    <property type="entry name" value="Ribosomal_uL10"/>
</dbReference>
<dbReference type="InterPro" id="IPR043141">
    <property type="entry name" value="Ribosomal_uL10-like_sf"/>
</dbReference>
<dbReference type="InterPro" id="IPR022973">
    <property type="entry name" value="Ribosomal_uL10_bac"/>
</dbReference>
<dbReference type="InterPro" id="IPR047865">
    <property type="entry name" value="Ribosomal_uL10_bac_type"/>
</dbReference>
<dbReference type="InterPro" id="IPR002363">
    <property type="entry name" value="Ribosomal_uL10_CS_bac"/>
</dbReference>
<dbReference type="NCBIfam" id="NF000955">
    <property type="entry name" value="PRK00099.1-1"/>
    <property type="match status" value="1"/>
</dbReference>
<dbReference type="PANTHER" id="PTHR11560">
    <property type="entry name" value="39S RIBOSOMAL PROTEIN L10, MITOCHONDRIAL"/>
    <property type="match status" value="1"/>
</dbReference>
<dbReference type="Pfam" id="PF00466">
    <property type="entry name" value="Ribosomal_L10"/>
    <property type="match status" value="1"/>
</dbReference>
<dbReference type="SUPFAM" id="SSF160369">
    <property type="entry name" value="Ribosomal protein L10-like"/>
    <property type="match status" value="1"/>
</dbReference>
<dbReference type="PROSITE" id="PS01109">
    <property type="entry name" value="RIBOSOMAL_L10"/>
    <property type="match status" value="1"/>
</dbReference>
<protein>
    <recommendedName>
        <fullName evidence="1">Large ribosomal subunit protein uL10</fullName>
    </recommendedName>
    <alternativeName>
        <fullName evidence="2">50S ribosomal protein L10</fullName>
    </alternativeName>
</protein>
<reference key="1">
    <citation type="journal article" date="2005" name="J. Bacteriol.">
        <title>Insights on evolution of virulence and resistance from the complete genome analysis of an early methicillin-resistant Staphylococcus aureus strain and a biofilm-producing methicillin-resistant Staphylococcus epidermidis strain.</title>
        <authorList>
            <person name="Gill S.R."/>
            <person name="Fouts D.E."/>
            <person name="Archer G.L."/>
            <person name="Mongodin E.F."/>
            <person name="DeBoy R.T."/>
            <person name="Ravel J."/>
            <person name="Paulsen I.T."/>
            <person name="Kolonay J.F."/>
            <person name="Brinkac L.M."/>
            <person name="Beanan M.J."/>
            <person name="Dodson R.J."/>
            <person name="Daugherty S.C."/>
            <person name="Madupu R."/>
            <person name="Angiuoli S.V."/>
            <person name="Durkin A.S."/>
            <person name="Haft D.H."/>
            <person name="Vamathevan J.J."/>
            <person name="Khouri H."/>
            <person name="Utterback T.R."/>
            <person name="Lee C."/>
            <person name="Dimitrov G."/>
            <person name="Jiang L."/>
            <person name="Qin H."/>
            <person name="Weidman J."/>
            <person name="Tran K."/>
            <person name="Kang K.H."/>
            <person name="Hance I.R."/>
            <person name="Nelson K.E."/>
            <person name="Fraser C.M."/>
        </authorList>
    </citation>
    <scope>NUCLEOTIDE SEQUENCE [LARGE SCALE GENOMIC DNA]</scope>
    <source>
        <strain>COL</strain>
    </source>
</reference>
<name>RL10_STAAC</name>
<keyword id="KW-0687">Ribonucleoprotein</keyword>
<keyword id="KW-0689">Ribosomal protein</keyword>
<keyword id="KW-0694">RNA-binding</keyword>
<keyword id="KW-0699">rRNA-binding</keyword>
<organism>
    <name type="scientific">Staphylococcus aureus (strain COL)</name>
    <dbReference type="NCBI Taxonomy" id="93062"/>
    <lineage>
        <taxon>Bacteria</taxon>
        <taxon>Bacillati</taxon>
        <taxon>Bacillota</taxon>
        <taxon>Bacilli</taxon>
        <taxon>Bacillales</taxon>
        <taxon>Staphylococcaceae</taxon>
        <taxon>Staphylococcus</taxon>
    </lineage>
</organism>
<sequence>MSAIIEAKKQLVDEIAEVLSNSVSTVIVDYRGLTVAEVTDLRSQLREAGVEYKVYKNTMVRRAAEKAGIEGLDEFLTGPTAIATSSEDAVAAAKVISGFAKDHEALEIKSGVMEGNVITAEEVKTVGSLPSHDGLVSMLLSVLQAPVRNFAYAVKAIGEQKEENAE</sequence>
<evidence type="ECO:0000255" key="1">
    <source>
        <dbReference type="HAMAP-Rule" id="MF_00362"/>
    </source>
</evidence>
<evidence type="ECO:0000305" key="2"/>
<feature type="chain" id="PRO_0000154705" description="Large ribosomal subunit protein uL10">
    <location>
        <begin position="1"/>
        <end position="166"/>
    </location>
</feature>
<proteinExistence type="inferred from homology"/>